<proteinExistence type="evidence at transcript level"/>
<organism>
    <name type="scientific">Caenorhabditis elegans</name>
    <dbReference type="NCBI Taxonomy" id="6239"/>
    <lineage>
        <taxon>Eukaryota</taxon>
        <taxon>Metazoa</taxon>
        <taxon>Ecdysozoa</taxon>
        <taxon>Nematoda</taxon>
        <taxon>Chromadorea</taxon>
        <taxon>Rhabditida</taxon>
        <taxon>Rhabditina</taxon>
        <taxon>Rhabditomorpha</taxon>
        <taxon>Rhabditoidea</taxon>
        <taxon>Rhabditidae</taxon>
        <taxon>Peloderinae</taxon>
        <taxon>Caenorhabditis</taxon>
    </lineage>
</organism>
<evidence type="ECO:0000250" key="1"/>
<evidence type="ECO:0000250" key="2">
    <source>
        <dbReference type="UniProtKB" id="D0VWV4"/>
    </source>
</evidence>
<evidence type="ECO:0000269" key="3">
    <source>
    </source>
</evidence>
<evidence type="ECO:0000305" key="4"/>
<name>C560_CAEEL</name>
<gene>
    <name type="primary">mev-1</name>
    <name type="synonym">cyt-1</name>
    <name type="ORF">T07C4.7</name>
</gene>
<dbReference type="EMBL" id="L26545">
    <property type="protein sequence ID" value="AAA20081.1"/>
    <property type="molecule type" value="Genomic_DNA"/>
</dbReference>
<dbReference type="EMBL" id="Z29443">
    <property type="protein sequence ID" value="CAA82572.1"/>
    <property type="molecule type" value="Genomic_DNA"/>
</dbReference>
<dbReference type="PIR" id="B53189">
    <property type="entry name" value="B53189"/>
</dbReference>
<dbReference type="RefSeq" id="NP_001366681.1">
    <property type="nucleotide sequence ID" value="NM_001379891.2"/>
</dbReference>
<dbReference type="RefSeq" id="NP_499283.1">
    <property type="nucleotide sequence ID" value="NM_066882.5"/>
</dbReference>
<dbReference type="SMR" id="P41956"/>
<dbReference type="BioGRID" id="57058">
    <property type="interactions" value="5"/>
</dbReference>
<dbReference type="FunCoup" id="P41956">
    <property type="interactions" value="1907"/>
</dbReference>
<dbReference type="STRING" id="6239.T07C4.7a.2"/>
<dbReference type="PaxDb" id="6239-T07C4.7.2"/>
<dbReference type="PeptideAtlas" id="P41956"/>
<dbReference type="EnsemblMetazoa" id="T07C4.7a.1">
    <property type="protein sequence ID" value="T07C4.7a.1"/>
    <property type="gene ID" value="WBGene00003225"/>
</dbReference>
<dbReference type="GeneID" id="260040"/>
<dbReference type="UCSC" id="T07C4.7.1">
    <property type="organism name" value="c. elegans"/>
</dbReference>
<dbReference type="AGR" id="WB:WBGene00003225"/>
<dbReference type="WormBase" id="T07C4.7a">
    <property type="protein sequence ID" value="CE00598"/>
    <property type="gene ID" value="WBGene00003225"/>
    <property type="gene designation" value="mev-1"/>
</dbReference>
<dbReference type="eggNOG" id="KOG0449">
    <property type="taxonomic scope" value="Eukaryota"/>
</dbReference>
<dbReference type="GeneTree" id="ENSGT00390000000566"/>
<dbReference type="HOGENOM" id="CLU_094691_1_0_1"/>
<dbReference type="InParanoid" id="P41956"/>
<dbReference type="OMA" id="LTWMLSG"/>
<dbReference type="OrthoDB" id="588261at2759"/>
<dbReference type="PhylomeDB" id="P41956"/>
<dbReference type="UniPathway" id="UPA00223"/>
<dbReference type="PRO" id="PR:P41956"/>
<dbReference type="Proteomes" id="UP000001940">
    <property type="component" value="Chromosome III"/>
</dbReference>
<dbReference type="Bgee" id="WBGene00003225">
    <property type="expression patterns" value="Expressed in pharyngeal muscle cell (C elegans) and 4 other cell types or tissues"/>
</dbReference>
<dbReference type="ExpressionAtlas" id="P41956">
    <property type="expression patterns" value="baseline"/>
</dbReference>
<dbReference type="GO" id="GO:0005743">
    <property type="term" value="C:mitochondrial inner membrane"/>
    <property type="evidence" value="ECO:0000250"/>
    <property type="project" value="UniProtKB"/>
</dbReference>
<dbReference type="GO" id="GO:0005739">
    <property type="term" value="C:mitochondrion"/>
    <property type="evidence" value="ECO:0007005"/>
    <property type="project" value="WormBase"/>
</dbReference>
<dbReference type="GO" id="GO:0045273">
    <property type="term" value="C:respiratory chain complex II (succinate dehydrogenase)"/>
    <property type="evidence" value="ECO:0000250"/>
    <property type="project" value="UniProtKB"/>
</dbReference>
<dbReference type="GO" id="GO:0009055">
    <property type="term" value="F:electron transfer activity"/>
    <property type="evidence" value="ECO:0007669"/>
    <property type="project" value="InterPro"/>
</dbReference>
<dbReference type="GO" id="GO:0020037">
    <property type="term" value="F:heme binding"/>
    <property type="evidence" value="ECO:0000250"/>
    <property type="project" value="UniProtKB"/>
</dbReference>
<dbReference type="GO" id="GO:0046872">
    <property type="term" value="F:metal ion binding"/>
    <property type="evidence" value="ECO:0007669"/>
    <property type="project" value="UniProtKB-KW"/>
</dbReference>
<dbReference type="GO" id="GO:0050829">
    <property type="term" value="P:defense response to Gram-negative bacterium"/>
    <property type="evidence" value="ECO:0000315"/>
    <property type="project" value="WormBase"/>
</dbReference>
<dbReference type="GO" id="GO:0008340">
    <property type="term" value="P:determination of adult lifespan"/>
    <property type="evidence" value="ECO:0000315"/>
    <property type="project" value="UniProtKB"/>
</dbReference>
<dbReference type="GO" id="GO:0045087">
    <property type="term" value="P:innate immune response"/>
    <property type="evidence" value="ECO:0000315"/>
    <property type="project" value="WormBase"/>
</dbReference>
<dbReference type="GO" id="GO:0006121">
    <property type="term" value="P:mitochondrial electron transport, succinate to ubiquinone"/>
    <property type="evidence" value="ECO:0000315"/>
    <property type="project" value="WormBase"/>
</dbReference>
<dbReference type="GO" id="GO:1902883">
    <property type="term" value="P:negative regulation of response to oxidative stress"/>
    <property type="evidence" value="ECO:0000316"/>
    <property type="project" value="UniProtKB"/>
</dbReference>
<dbReference type="GO" id="GO:1902884">
    <property type="term" value="P:positive regulation of response to oxidative stress"/>
    <property type="evidence" value="ECO:0000315"/>
    <property type="project" value="UniProtKB"/>
</dbReference>
<dbReference type="GO" id="GO:0006979">
    <property type="term" value="P:response to oxidative stress"/>
    <property type="evidence" value="ECO:0000315"/>
    <property type="project" value="WormBase"/>
</dbReference>
<dbReference type="GO" id="GO:0006099">
    <property type="term" value="P:tricarboxylic acid cycle"/>
    <property type="evidence" value="ECO:0007669"/>
    <property type="project" value="UniProtKB-UniPathway"/>
</dbReference>
<dbReference type="CDD" id="cd03499">
    <property type="entry name" value="SQR_TypeC_SdhC"/>
    <property type="match status" value="1"/>
</dbReference>
<dbReference type="FunFam" id="1.20.1300.10:FF:000011">
    <property type="entry name" value="Succinate dehydrogenase cytochrome b560 subunit"/>
    <property type="match status" value="1"/>
</dbReference>
<dbReference type="Gene3D" id="1.20.1300.10">
    <property type="entry name" value="Fumarate reductase/succinate dehydrogenase, transmembrane subunit"/>
    <property type="match status" value="1"/>
</dbReference>
<dbReference type="InterPro" id="IPR034804">
    <property type="entry name" value="SQR/QFR_C/D"/>
</dbReference>
<dbReference type="InterPro" id="IPR018495">
    <property type="entry name" value="Succ_DH_cyt_bsu_CS"/>
</dbReference>
<dbReference type="InterPro" id="IPR014314">
    <property type="entry name" value="Succ_DH_cytb556"/>
</dbReference>
<dbReference type="InterPro" id="IPR000701">
    <property type="entry name" value="SuccDH_FuR_B_TM-su"/>
</dbReference>
<dbReference type="NCBIfam" id="TIGR02970">
    <property type="entry name" value="succ_dehyd_cytB"/>
    <property type="match status" value="1"/>
</dbReference>
<dbReference type="PANTHER" id="PTHR10978">
    <property type="entry name" value="SUCCINATE DEHYDROGENASE CYTOCHROME B560 SUBUNIT"/>
    <property type="match status" value="1"/>
</dbReference>
<dbReference type="PANTHER" id="PTHR10978:SF5">
    <property type="entry name" value="SUCCINATE DEHYDROGENASE CYTOCHROME B560 SUBUNIT, MITOCHONDRIAL"/>
    <property type="match status" value="1"/>
</dbReference>
<dbReference type="Pfam" id="PF01127">
    <property type="entry name" value="Sdh_cyt"/>
    <property type="match status" value="1"/>
</dbReference>
<dbReference type="SUPFAM" id="SSF81343">
    <property type="entry name" value="Fumarate reductase respiratory complex transmembrane subunits"/>
    <property type="match status" value="1"/>
</dbReference>
<dbReference type="PROSITE" id="PS01000">
    <property type="entry name" value="SDH_CYT_1"/>
    <property type="match status" value="1"/>
</dbReference>
<dbReference type="PROSITE" id="PS01001">
    <property type="entry name" value="SDH_CYT_2"/>
    <property type="match status" value="1"/>
</dbReference>
<reference key="1">
    <citation type="journal article" date="1994" name="Cell">
        <title>C. elegans cell survival gene ced-9 encodes a functional homolog of the mammalian proto-oncogene bcl-2.</title>
        <authorList>
            <person name="Hengartner M.O."/>
            <person name="Horvitz H.R."/>
        </authorList>
    </citation>
    <scope>NUCLEOTIDE SEQUENCE [GENOMIC DNA]</scope>
    <source>
        <strain>Bristol N2</strain>
    </source>
</reference>
<reference key="2">
    <citation type="journal article" date="1998" name="Science">
        <title>Genome sequence of the nematode C. elegans: a platform for investigating biology.</title>
        <authorList>
            <consortium name="The C. elegans sequencing consortium"/>
        </authorList>
    </citation>
    <scope>NUCLEOTIDE SEQUENCE [LARGE SCALE GENOMIC DNA]</scope>
    <source>
        <strain>Bristol N2</strain>
    </source>
</reference>
<reference key="3">
    <citation type="journal article" date="2005" name="Mol. Microbiol.">
        <title>Paralysis and killing of Caenorhabditis elegans by enteropathogenic Escherichia coli requires the bacterial tryptophanase gene.</title>
        <authorList>
            <person name="Anyanful A."/>
            <person name="Dolan-Livengood J.M."/>
            <person name="Lewis T."/>
            <person name="Sheth S."/>
            <person name="Dezalia M.N."/>
            <person name="Sherman M.A."/>
            <person name="Kalman L.V."/>
            <person name="Benian G.M."/>
            <person name="Kalman D."/>
        </authorList>
    </citation>
    <scope>FUNCTION</scope>
</reference>
<comment type="function">
    <text evidence="2 3">Membrane-anchoring subunit of succinate dehydrogenase (SDH) that is involved in complex II of the mitochondrial electron transport chain and is responsible for transferring electrons from succinate to ubiquinone (coenzyme Q) (By similarity). Mediates resistance to enteropathogenic E.coli infection (PubMed:16091039).</text>
</comment>
<comment type="cofactor">
    <cofactor evidence="1">
        <name>heme</name>
        <dbReference type="ChEBI" id="CHEBI:30413"/>
    </cofactor>
    <text evidence="1">The heme is bound between the two transmembrane subunits.</text>
</comment>
<comment type="pathway">
    <text>Carbohydrate metabolism; tricarboxylic acid cycle.</text>
</comment>
<comment type="subunit">
    <text evidence="1">Component of complex II composed of four subunits: a flavoprotein (FP), iron-sulfur protein (IP), and a cytochrome b560 composed of two integral membrane proteins.</text>
</comment>
<comment type="subcellular location">
    <subcellularLocation>
        <location evidence="1">Mitochondrion inner membrane</location>
        <topology evidence="1">Multi-pass membrane protein</topology>
    </subcellularLocation>
</comment>
<comment type="developmental stage">
    <text>Is expressed at a constant level throughout development.</text>
</comment>
<comment type="similarity">
    <text evidence="4">Belongs to the cytochrome b560 family.</text>
</comment>
<sequence length="182" mass="19982">MINIPTAILCRLGARSSISRSFGTSIVTKSEAKTPIQKFGWEYLLKQRSKNRPIAPHLTVYQPQLTWMLSGFHRISGCVMAGTLLVGGIGFAVLPFDFTAFVDFIRSWNLPCAVTAVFKYIIAFPIIFHTLNGIRFLGFDLAKGVNNVGQIYKSGYLVSGLSAILALAIVFNSCQNKSNKTA</sequence>
<accession>P41956</accession>
<feature type="transit peptide" description="Mitochondrion" evidence="1">
    <location>
        <begin position="1"/>
        <end status="unknown"/>
    </location>
</feature>
<feature type="chain" id="PRO_0000003637" description="Succinate dehydrogenase cytochrome b560 subunit, mitochondrial">
    <location>
        <begin status="unknown"/>
        <end position="182"/>
    </location>
</feature>
<feature type="transmembrane region" description="Helical" evidence="1">
    <location>
        <begin position="65"/>
        <end position="94"/>
    </location>
</feature>
<feature type="topological domain" description="Mitochondrial intermembrane" evidence="1">
    <location>
        <begin position="95"/>
        <end position="114"/>
    </location>
</feature>
<feature type="transmembrane region" description="Helical" evidence="1">
    <location>
        <begin position="115"/>
        <end position="139"/>
    </location>
</feature>
<feature type="topological domain" description="Mitochondrial matrix" evidence="1">
    <location>
        <begin position="140"/>
        <end position="147"/>
    </location>
</feature>
<feature type="transmembrane region" description="Helical" evidence="1">
    <location>
        <begin position="148"/>
        <end position="169"/>
    </location>
</feature>
<feature type="topological domain" description="Mitochondrial intermembrane" evidence="1">
    <location>
        <begin position="170"/>
        <end position="172"/>
    </location>
</feature>
<feature type="binding site" description="axial binding residue" evidence="1">
    <location>
        <position position="129"/>
    </location>
    <ligand>
        <name>heme</name>
        <dbReference type="ChEBI" id="CHEBI:30413"/>
        <note>ligand shared with second transmembrane protein subunit</note>
    </ligand>
    <ligandPart>
        <name>Fe</name>
        <dbReference type="ChEBI" id="CHEBI:18248"/>
    </ligandPart>
</feature>
<keyword id="KW-0249">Electron transport</keyword>
<keyword id="KW-0349">Heme</keyword>
<keyword id="KW-0408">Iron</keyword>
<keyword id="KW-0472">Membrane</keyword>
<keyword id="KW-0479">Metal-binding</keyword>
<keyword id="KW-0496">Mitochondrion</keyword>
<keyword id="KW-0999">Mitochondrion inner membrane</keyword>
<keyword id="KW-1185">Reference proteome</keyword>
<keyword id="KW-0809">Transit peptide</keyword>
<keyword id="KW-0812">Transmembrane</keyword>
<keyword id="KW-1133">Transmembrane helix</keyword>
<keyword id="KW-0813">Transport</keyword>
<keyword id="KW-0816">Tricarboxylic acid cycle</keyword>
<protein>
    <recommendedName>
        <fullName>Succinate dehydrogenase cytochrome b560 subunit, mitochondrial</fullName>
    </recommendedName>
</protein>